<comment type="catalytic activity">
    <reaction evidence="1">
        <text>tRNA(Phe) + L-phenylalanine + ATP = L-phenylalanyl-tRNA(Phe) + AMP + diphosphate + H(+)</text>
        <dbReference type="Rhea" id="RHEA:19413"/>
        <dbReference type="Rhea" id="RHEA-COMP:9668"/>
        <dbReference type="Rhea" id="RHEA-COMP:9699"/>
        <dbReference type="ChEBI" id="CHEBI:15378"/>
        <dbReference type="ChEBI" id="CHEBI:30616"/>
        <dbReference type="ChEBI" id="CHEBI:33019"/>
        <dbReference type="ChEBI" id="CHEBI:58095"/>
        <dbReference type="ChEBI" id="CHEBI:78442"/>
        <dbReference type="ChEBI" id="CHEBI:78531"/>
        <dbReference type="ChEBI" id="CHEBI:456215"/>
        <dbReference type="EC" id="6.1.1.20"/>
    </reaction>
</comment>
<comment type="cofactor">
    <cofactor evidence="1">
        <name>Mg(2+)</name>
        <dbReference type="ChEBI" id="CHEBI:18420"/>
    </cofactor>
    <text evidence="1">Binds 2 magnesium ions per tetramer.</text>
</comment>
<comment type="subunit">
    <text evidence="1">Tetramer of two alpha and two beta subunits.</text>
</comment>
<comment type="subcellular location">
    <subcellularLocation>
        <location evidence="1">Cytoplasm</location>
    </subcellularLocation>
</comment>
<comment type="similarity">
    <text evidence="1">Belongs to the class-II aminoacyl-tRNA synthetase family. Phe-tRNA synthetase alpha subunit type 1 subfamily.</text>
</comment>
<proteinExistence type="inferred from homology"/>
<sequence>MSDIERLEQEICLALEMAGDEQALEAVRIAALGKKGSISEKLKALGKMSASERQKVGPVLNGLKNRVLELWTQKRDFLRRQAMDACLTRETVDITLPVRSSPIERGRIHPISQVIEEIIAIYMKMGFSLAEGPDIETDYYNFTALNFPEGHPAREMHDTFFFDVNKTGERKLLRTHTSPVQIRTMEKQKAPIRIIIPGKTYRMDSDATHSPMFHQVEGLVIDKTSTIAHMMWLHETFCKAFFEVSSVKMRFRPSFFPFTEPSMEVDIQCDRSGSEVKFGEGQDWLEILGCGMVHPHVLKNVGLDPDEYQGFAWGMGIDRIAMLKYGMPDLRAFFDADLRWLDHYGFRCFDMHAFFPGLRNV</sequence>
<keyword id="KW-0030">Aminoacyl-tRNA synthetase</keyword>
<keyword id="KW-0067">ATP-binding</keyword>
<keyword id="KW-0963">Cytoplasm</keyword>
<keyword id="KW-0436">Ligase</keyword>
<keyword id="KW-0460">Magnesium</keyword>
<keyword id="KW-0479">Metal-binding</keyword>
<keyword id="KW-0547">Nucleotide-binding</keyword>
<keyword id="KW-0648">Protein biosynthesis</keyword>
<feature type="chain" id="PRO_0000231964" description="Phenylalanine--tRNA ligase alpha subunit">
    <location>
        <begin position="1"/>
        <end position="361"/>
    </location>
</feature>
<feature type="binding site" evidence="1">
    <location>
        <position position="260"/>
    </location>
    <ligand>
        <name>Mg(2+)</name>
        <dbReference type="ChEBI" id="CHEBI:18420"/>
        <note>shared with beta subunit</note>
    </ligand>
</feature>
<gene>
    <name evidence="1" type="primary">pheS</name>
    <name type="ordered locus">BH00840</name>
</gene>
<organism>
    <name type="scientific">Bartonella henselae (strain ATCC 49882 / DSM 28221 / CCUG 30454 / Houston 1)</name>
    <name type="common">Rochalimaea henselae</name>
    <dbReference type="NCBI Taxonomy" id="283166"/>
    <lineage>
        <taxon>Bacteria</taxon>
        <taxon>Pseudomonadati</taxon>
        <taxon>Pseudomonadota</taxon>
        <taxon>Alphaproteobacteria</taxon>
        <taxon>Hyphomicrobiales</taxon>
        <taxon>Bartonellaceae</taxon>
        <taxon>Bartonella</taxon>
    </lineage>
</organism>
<evidence type="ECO:0000255" key="1">
    <source>
        <dbReference type="HAMAP-Rule" id="MF_00281"/>
    </source>
</evidence>
<accession>Q6G5E3</accession>
<protein>
    <recommendedName>
        <fullName evidence="1">Phenylalanine--tRNA ligase alpha subunit</fullName>
        <ecNumber evidence="1">6.1.1.20</ecNumber>
    </recommendedName>
    <alternativeName>
        <fullName evidence="1">Phenylalanyl-tRNA synthetase alpha subunit</fullName>
        <shortName evidence="1">PheRS</shortName>
    </alternativeName>
</protein>
<reference key="1">
    <citation type="journal article" date="2004" name="Proc. Natl. Acad. Sci. U.S.A.">
        <title>The louse-borne human pathogen Bartonella quintana is a genomic derivative of the zoonotic agent Bartonella henselae.</title>
        <authorList>
            <person name="Alsmark U.C.M."/>
            <person name="Frank A.C."/>
            <person name="Karlberg E.O."/>
            <person name="Legault B.-A."/>
            <person name="Ardell D.H."/>
            <person name="Canbaeck B."/>
            <person name="Eriksson A.-S."/>
            <person name="Naeslund A.K."/>
            <person name="Handley S.A."/>
            <person name="Huvet M."/>
            <person name="La Scola B."/>
            <person name="Holmberg M."/>
            <person name="Andersson S.G.E."/>
        </authorList>
    </citation>
    <scope>NUCLEOTIDE SEQUENCE [LARGE SCALE GENOMIC DNA]</scope>
    <source>
        <strain>ATCC 49882 / DSM 28221 / CCUG 30454 / Houston 1</strain>
    </source>
</reference>
<dbReference type="EC" id="6.1.1.20" evidence="1"/>
<dbReference type="EMBL" id="BX897699">
    <property type="protein sequence ID" value="CAF26900.1"/>
    <property type="molecule type" value="Genomic_DNA"/>
</dbReference>
<dbReference type="RefSeq" id="WP_011180045.1">
    <property type="nucleotide sequence ID" value="NZ_LRIJ02000001.1"/>
</dbReference>
<dbReference type="SMR" id="Q6G5E3"/>
<dbReference type="PaxDb" id="283166-BH00840"/>
<dbReference type="EnsemblBacteria" id="CAF26900">
    <property type="protein sequence ID" value="CAF26900"/>
    <property type="gene ID" value="BH00840"/>
</dbReference>
<dbReference type="GeneID" id="92986370"/>
<dbReference type="KEGG" id="bhe:BH00840"/>
<dbReference type="eggNOG" id="COG0016">
    <property type="taxonomic scope" value="Bacteria"/>
</dbReference>
<dbReference type="OrthoDB" id="9800719at2"/>
<dbReference type="Proteomes" id="UP000000421">
    <property type="component" value="Chromosome"/>
</dbReference>
<dbReference type="GO" id="GO:0005737">
    <property type="term" value="C:cytoplasm"/>
    <property type="evidence" value="ECO:0007669"/>
    <property type="project" value="UniProtKB-SubCell"/>
</dbReference>
<dbReference type="GO" id="GO:0005524">
    <property type="term" value="F:ATP binding"/>
    <property type="evidence" value="ECO:0007669"/>
    <property type="project" value="UniProtKB-UniRule"/>
</dbReference>
<dbReference type="GO" id="GO:0000287">
    <property type="term" value="F:magnesium ion binding"/>
    <property type="evidence" value="ECO:0007669"/>
    <property type="project" value="UniProtKB-UniRule"/>
</dbReference>
<dbReference type="GO" id="GO:0004826">
    <property type="term" value="F:phenylalanine-tRNA ligase activity"/>
    <property type="evidence" value="ECO:0007669"/>
    <property type="project" value="UniProtKB-UniRule"/>
</dbReference>
<dbReference type="GO" id="GO:0000049">
    <property type="term" value="F:tRNA binding"/>
    <property type="evidence" value="ECO:0007669"/>
    <property type="project" value="InterPro"/>
</dbReference>
<dbReference type="GO" id="GO:0006432">
    <property type="term" value="P:phenylalanyl-tRNA aminoacylation"/>
    <property type="evidence" value="ECO:0007669"/>
    <property type="project" value="UniProtKB-UniRule"/>
</dbReference>
<dbReference type="CDD" id="cd00496">
    <property type="entry name" value="PheRS_alpha_core"/>
    <property type="match status" value="1"/>
</dbReference>
<dbReference type="FunFam" id="3.30.930.10:FF:000003">
    <property type="entry name" value="Phenylalanine--tRNA ligase alpha subunit"/>
    <property type="match status" value="1"/>
</dbReference>
<dbReference type="Gene3D" id="3.30.930.10">
    <property type="entry name" value="Bira Bifunctional Protein, Domain 2"/>
    <property type="match status" value="1"/>
</dbReference>
<dbReference type="HAMAP" id="MF_00281">
    <property type="entry name" value="Phe_tRNA_synth_alpha1"/>
    <property type="match status" value="1"/>
</dbReference>
<dbReference type="InterPro" id="IPR006195">
    <property type="entry name" value="aa-tRNA-synth_II"/>
</dbReference>
<dbReference type="InterPro" id="IPR045864">
    <property type="entry name" value="aa-tRNA-synth_II/BPL/LPL"/>
</dbReference>
<dbReference type="InterPro" id="IPR004529">
    <property type="entry name" value="Phe-tRNA-synth_IIc_asu"/>
</dbReference>
<dbReference type="InterPro" id="IPR004188">
    <property type="entry name" value="Phe-tRNA_ligase_II_N"/>
</dbReference>
<dbReference type="InterPro" id="IPR022911">
    <property type="entry name" value="Phe_tRNA_ligase_alpha1_bac"/>
</dbReference>
<dbReference type="InterPro" id="IPR002319">
    <property type="entry name" value="Phenylalanyl-tRNA_Synthase"/>
</dbReference>
<dbReference type="InterPro" id="IPR010978">
    <property type="entry name" value="tRNA-bd_arm"/>
</dbReference>
<dbReference type="NCBIfam" id="TIGR00468">
    <property type="entry name" value="pheS"/>
    <property type="match status" value="1"/>
</dbReference>
<dbReference type="PANTHER" id="PTHR11538:SF41">
    <property type="entry name" value="PHENYLALANINE--TRNA LIGASE, MITOCHONDRIAL"/>
    <property type="match status" value="1"/>
</dbReference>
<dbReference type="PANTHER" id="PTHR11538">
    <property type="entry name" value="PHENYLALANYL-TRNA SYNTHETASE"/>
    <property type="match status" value="1"/>
</dbReference>
<dbReference type="Pfam" id="PF02912">
    <property type="entry name" value="Phe_tRNA-synt_N"/>
    <property type="match status" value="1"/>
</dbReference>
<dbReference type="Pfam" id="PF01409">
    <property type="entry name" value="tRNA-synt_2d"/>
    <property type="match status" value="1"/>
</dbReference>
<dbReference type="SUPFAM" id="SSF55681">
    <property type="entry name" value="Class II aaRS and biotin synthetases"/>
    <property type="match status" value="1"/>
</dbReference>
<dbReference type="SUPFAM" id="SSF46589">
    <property type="entry name" value="tRNA-binding arm"/>
    <property type="match status" value="1"/>
</dbReference>
<dbReference type="PROSITE" id="PS50862">
    <property type="entry name" value="AA_TRNA_LIGASE_II"/>
    <property type="match status" value="1"/>
</dbReference>
<name>SYFA_BARHE</name>